<sequence>MPIVEDRLFRKIKKLTGKAIGDFNLIEEGDRIAVAVSGGKDSWTLLHILDSLRRRAPIRYELIAVNVDPGFPGYRTDIMEAHLREYGFANRMERTDCATIIKEKLRPGSSFCAFCARLRRGVLYSVATELGCNKLALGHHLDDFVETLLLNQFYVGTLAAMSPKLLADNGQHTVIRPMVYVEESDVAAFAEANGLPAIPCGCPEETRSDQNRQRMKRLVSQLAEDIPHLRSSLIGALGNVQPRHLLDASLKDFGTAAAD</sequence>
<protein>
    <recommendedName>
        <fullName evidence="1">tRNA-cytidine(32) 2-sulfurtransferase</fullName>
        <ecNumber evidence="1">2.8.1.-</ecNumber>
    </recommendedName>
    <alternativeName>
        <fullName evidence="1">Two-thiocytidine biosynthesis protein A</fullName>
    </alternativeName>
    <alternativeName>
        <fullName evidence="1">tRNA 2-thiocytidine biosynthesis protein TtcA</fullName>
    </alternativeName>
</protein>
<evidence type="ECO:0000255" key="1">
    <source>
        <dbReference type="HAMAP-Rule" id="MF_01850"/>
    </source>
</evidence>
<keyword id="KW-0004">4Fe-4S</keyword>
<keyword id="KW-0067">ATP-binding</keyword>
<keyword id="KW-0963">Cytoplasm</keyword>
<keyword id="KW-0408">Iron</keyword>
<keyword id="KW-0411">Iron-sulfur</keyword>
<keyword id="KW-0460">Magnesium</keyword>
<keyword id="KW-0479">Metal-binding</keyword>
<keyword id="KW-0547">Nucleotide-binding</keyword>
<keyword id="KW-1185">Reference proteome</keyword>
<keyword id="KW-0694">RNA-binding</keyword>
<keyword id="KW-0808">Transferase</keyword>
<keyword id="KW-0819">tRNA processing</keyword>
<keyword id="KW-0820">tRNA-binding</keyword>
<gene>
    <name evidence="1" type="primary">ttcA</name>
    <name type="ordered locus">Pcar_0671</name>
</gene>
<feature type="chain" id="PRO_0000348782" description="tRNA-cytidine(32) 2-sulfurtransferase">
    <location>
        <begin position="1"/>
        <end position="259"/>
    </location>
</feature>
<feature type="short sequence motif" description="PP-loop motif" evidence="1">
    <location>
        <begin position="37"/>
        <end position="42"/>
    </location>
</feature>
<feature type="binding site" evidence="1">
    <location>
        <position position="112"/>
    </location>
    <ligand>
        <name>[4Fe-4S] cluster</name>
        <dbReference type="ChEBI" id="CHEBI:49883"/>
    </ligand>
</feature>
<feature type="binding site" evidence="1">
    <location>
        <position position="115"/>
    </location>
    <ligand>
        <name>[4Fe-4S] cluster</name>
        <dbReference type="ChEBI" id="CHEBI:49883"/>
    </ligand>
</feature>
<feature type="binding site" evidence="1">
    <location>
        <position position="202"/>
    </location>
    <ligand>
        <name>[4Fe-4S] cluster</name>
        <dbReference type="ChEBI" id="CHEBI:49883"/>
    </ligand>
</feature>
<organism>
    <name type="scientific">Syntrophotalea carbinolica (strain DSM 2380 / NBRC 103641 / GraBd1)</name>
    <name type="common">Pelobacter carbinolicus</name>
    <dbReference type="NCBI Taxonomy" id="338963"/>
    <lineage>
        <taxon>Bacteria</taxon>
        <taxon>Pseudomonadati</taxon>
        <taxon>Thermodesulfobacteriota</taxon>
        <taxon>Desulfuromonadia</taxon>
        <taxon>Desulfuromonadales</taxon>
        <taxon>Syntrophotaleaceae</taxon>
        <taxon>Syntrophotalea</taxon>
    </lineage>
</organism>
<accession>Q3A6S7</accession>
<dbReference type="EC" id="2.8.1.-" evidence="1"/>
<dbReference type="EMBL" id="CP000142">
    <property type="protein sequence ID" value="ABA87930.1"/>
    <property type="molecule type" value="Genomic_DNA"/>
</dbReference>
<dbReference type="RefSeq" id="WP_011340373.1">
    <property type="nucleotide sequence ID" value="NC_007498.2"/>
</dbReference>
<dbReference type="SMR" id="Q3A6S7"/>
<dbReference type="STRING" id="338963.Pcar_0671"/>
<dbReference type="KEGG" id="pca:Pcar_0671"/>
<dbReference type="eggNOG" id="COG0037">
    <property type="taxonomic scope" value="Bacteria"/>
</dbReference>
<dbReference type="HOGENOM" id="CLU_026481_0_0_7"/>
<dbReference type="OrthoDB" id="9801054at2"/>
<dbReference type="Proteomes" id="UP000002534">
    <property type="component" value="Chromosome"/>
</dbReference>
<dbReference type="GO" id="GO:0005737">
    <property type="term" value="C:cytoplasm"/>
    <property type="evidence" value="ECO:0007669"/>
    <property type="project" value="UniProtKB-SubCell"/>
</dbReference>
<dbReference type="GO" id="GO:0051539">
    <property type="term" value="F:4 iron, 4 sulfur cluster binding"/>
    <property type="evidence" value="ECO:0007669"/>
    <property type="project" value="UniProtKB-KW"/>
</dbReference>
<dbReference type="GO" id="GO:0005524">
    <property type="term" value="F:ATP binding"/>
    <property type="evidence" value="ECO:0007669"/>
    <property type="project" value="UniProtKB-KW"/>
</dbReference>
<dbReference type="GO" id="GO:0046872">
    <property type="term" value="F:metal ion binding"/>
    <property type="evidence" value="ECO:0007669"/>
    <property type="project" value="UniProtKB-KW"/>
</dbReference>
<dbReference type="GO" id="GO:0016740">
    <property type="term" value="F:transferase activity"/>
    <property type="evidence" value="ECO:0007669"/>
    <property type="project" value="UniProtKB-KW"/>
</dbReference>
<dbReference type="GO" id="GO:0000049">
    <property type="term" value="F:tRNA binding"/>
    <property type="evidence" value="ECO:0007669"/>
    <property type="project" value="UniProtKB-KW"/>
</dbReference>
<dbReference type="GO" id="GO:0006400">
    <property type="term" value="P:tRNA modification"/>
    <property type="evidence" value="ECO:0007669"/>
    <property type="project" value="UniProtKB-ARBA"/>
</dbReference>
<dbReference type="CDD" id="cd24138">
    <property type="entry name" value="TtcA-like"/>
    <property type="match status" value="1"/>
</dbReference>
<dbReference type="Gene3D" id="3.40.50.620">
    <property type="entry name" value="HUPs"/>
    <property type="match status" value="1"/>
</dbReference>
<dbReference type="HAMAP" id="MF_01850">
    <property type="entry name" value="TtcA"/>
    <property type="match status" value="1"/>
</dbReference>
<dbReference type="InterPro" id="IPR014729">
    <property type="entry name" value="Rossmann-like_a/b/a_fold"/>
</dbReference>
<dbReference type="InterPro" id="IPR011063">
    <property type="entry name" value="TilS/TtcA_N"/>
</dbReference>
<dbReference type="InterPro" id="IPR012089">
    <property type="entry name" value="tRNA_Cyd_32_2_STrfase"/>
</dbReference>
<dbReference type="InterPro" id="IPR035107">
    <property type="entry name" value="tRNA_thiolation_TtcA_Ctu1"/>
</dbReference>
<dbReference type="NCBIfam" id="NF007972">
    <property type="entry name" value="PRK10696.1"/>
    <property type="match status" value="1"/>
</dbReference>
<dbReference type="PANTHER" id="PTHR43686:SF1">
    <property type="entry name" value="AMINOTRAN_5 DOMAIN-CONTAINING PROTEIN"/>
    <property type="match status" value="1"/>
</dbReference>
<dbReference type="PANTHER" id="PTHR43686">
    <property type="entry name" value="SULFURTRANSFERASE-RELATED"/>
    <property type="match status" value="1"/>
</dbReference>
<dbReference type="Pfam" id="PF01171">
    <property type="entry name" value="ATP_bind_3"/>
    <property type="match status" value="1"/>
</dbReference>
<dbReference type="PIRSF" id="PIRSF004976">
    <property type="entry name" value="ATPase_YdaO"/>
    <property type="match status" value="1"/>
</dbReference>
<dbReference type="SUPFAM" id="SSF52402">
    <property type="entry name" value="Adenine nucleotide alpha hydrolases-like"/>
    <property type="match status" value="1"/>
</dbReference>
<reference key="1">
    <citation type="submission" date="2005-10" db="EMBL/GenBank/DDBJ databases">
        <title>Complete sequence of Pelobacter carbinolicus DSM 2380.</title>
        <authorList>
            <person name="Copeland A."/>
            <person name="Lucas S."/>
            <person name="Lapidus A."/>
            <person name="Barry K."/>
            <person name="Detter J.C."/>
            <person name="Glavina T."/>
            <person name="Hammon N."/>
            <person name="Israni S."/>
            <person name="Pitluck S."/>
            <person name="Chertkov O."/>
            <person name="Schmutz J."/>
            <person name="Larimer F."/>
            <person name="Land M."/>
            <person name="Kyrpides N."/>
            <person name="Ivanova N."/>
            <person name="Richardson P."/>
        </authorList>
    </citation>
    <scope>NUCLEOTIDE SEQUENCE [LARGE SCALE GENOMIC DNA]</scope>
    <source>
        <strain>DSM 2380 / NBRC 103641 / GraBd1</strain>
    </source>
</reference>
<comment type="function">
    <text evidence="1">Catalyzes the ATP-dependent 2-thiolation of cytidine in position 32 of tRNA, to form 2-thiocytidine (s(2)C32). The sulfur atoms are provided by the cysteine/cysteine desulfurase (IscS) system.</text>
</comment>
<comment type="catalytic activity">
    <reaction evidence="1">
        <text>cytidine(32) in tRNA + S-sulfanyl-L-cysteinyl-[cysteine desulfurase] + AH2 + ATP = 2-thiocytidine(32) in tRNA + L-cysteinyl-[cysteine desulfurase] + A + AMP + diphosphate + H(+)</text>
        <dbReference type="Rhea" id="RHEA:57048"/>
        <dbReference type="Rhea" id="RHEA-COMP:10288"/>
        <dbReference type="Rhea" id="RHEA-COMP:12157"/>
        <dbReference type="Rhea" id="RHEA-COMP:12158"/>
        <dbReference type="Rhea" id="RHEA-COMP:14821"/>
        <dbReference type="ChEBI" id="CHEBI:13193"/>
        <dbReference type="ChEBI" id="CHEBI:15378"/>
        <dbReference type="ChEBI" id="CHEBI:17499"/>
        <dbReference type="ChEBI" id="CHEBI:29950"/>
        <dbReference type="ChEBI" id="CHEBI:30616"/>
        <dbReference type="ChEBI" id="CHEBI:33019"/>
        <dbReference type="ChEBI" id="CHEBI:61963"/>
        <dbReference type="ChEBI" id="CHEBI:82748"/>
        <dbReference type="ChEBI" id="CHEBI:141453"/>
        <dbReference type="ChEBI" id="CHEBI:456215"/>
    </reaction>
    <physiologicalReaction direction="left-to-right" evidence="1">
        <dbReference type="Rhea" id="RHEA:57049"/>
    </physiologicalReaction>
</comment>
<comment type="cofactor">
    <cofactor evidence="1">
        <name>Mg(2+)</name>
        <dbReference type="ChEBI" id="CHEBI:18420"/>
    </cofactor>
</comment>
<comment type="cofactor">
    <cofactor evidence="1">
        <name>[4Fe-4S] cluster</name>
        <dbReference type="ChEBI" id="CHEBI:49883"/>
    </cofactor>
    <text evidence="1">Binds 1 [4Fe-4S] cluster per subunit. The cluster is chelated by three Cys residues, the fourth Fe has a free coordination site that may bind a sulfur atom transferred from the persulfide of IscS.</text>
</comment>
<comment type="pathway">
    <text evidence="1">tRNA modification.</text>
</comment>
<comment type="subunit">
    <text evidence="1">Homodimer.</text>
</comment>
<comment type="subcellular location">
    <subcellularLocation>
        <location evidence="1">Cytoplasm</location>
    </subcellularLocation>
</comment>
<comment type="miscellaneous">
    <text evidence="1">The thiolation reaction likely consists of two steps: a first activation step by ATP to form an adenylated intermediate of the target base of tRNA, and a second nucleophilic substitution step of the sulfur (S) atom supplied by the hydrosulfide attached to the Fe-S cluster.</text>
</comment>
<comment type="similarity">
    <text evidence="1">Belongs to the TtcA family.</text>
</comment>
<name>TTCA_SYNC1</name>
<proteinExistence type="inferred from homology"/>